<reference key="1">
    <citation type="journal article" date="2004" name="Proc. Natl. Acad. Sci. U.S.A.">
        <title>Comparison of the genome of the oral pathogen Treponema denticola with other spirochete genomes.</title>
        <authorList>
            <person name="Seshadri R."/>
            <person name="Myers G.S.A."/>
            <person name="Tettelin H."/>
            <person name="Eisen J.A."/>
            <person name="Heidelberg J.F."/>
            <person name="Dodson R.J."/>
            <person name="Davidsen T.M."/>
            <person name="DeBoy R.T."/>
            <person name="Fouts D.E."/>
            <person name="Haft D.H."/>
            <person name="Selengut J."/>
            <person name="Ren Q."/>
            <person name="Brinkac L.M."/>
            <person name="Madupu R."/>
            <person name="Kolonay J.F."/>
            <person name="Durkin S.A."/>
            <person name="Daugherty S.C."/>
            <person name="Shetty J."/>
            <person name="Shvartsbeyn A."/>
            <person name="Gebregeorgis E."/>
            <person name="Geer K."/>
            <person name="Tsegaye G."/>
            <person name="Malek J.A."/>
            <person name="Ayodeji B."/>
            <person name="Shatsman S."/>
            <person name="McLeod M.P."/>
            <person name="Smajs D."/>
            <person name="Howell J.K."/>
            <person name="Pal S."/>
            <person name="Amin A."/>
            <person name="Vashisth P."/>
            <person name="McNeill T.Z."/>
            <person name="Xiang Q."/>
            <person name="Sodergren E."/>
            <person name="Baca E."/>
            <person name="Weinstock G.M."/>
            <person name="Norris S.J."/>
            <person name="Fraser C.M."/>
            <person name="Paulsen I.T."/>
        </authorList>
    </citation>
    <scope>NUCLEOTIDE SEQUENCE [LARGE SCALE GENOMIC DNA]</scope>
    <source>
        <strain>ATCC 35405 / DSM 14222 / CIP 103919 / JCM 8153 / KCTC 15104</strain>
    </source>
</reference>
<name>FLIW_TREDE</name>
<accession>Q73K68</accession>
<keyword id="KW-1005">Bacterial flagellum biogenesis</keyword>
<keyword id="KW-0143">Chaperone</keyword>
<keyword id="KW-0963">Cytoplasm</keyword>
<keyword id="KW-1185">Reference proteome</keyword>
<keyword id="KW-0810">Translation regulation</keyword>
<proteinExistence type="inferred from homology"/>
<comment type="function">
    <text evidence="1">Acts as an anti-CsrA protein, binds CsrA and prevents it from repressing translation of its target genes, one of which is flagellin. Binds to flagellin and participates in the assembly of the flagellum.</text>
</comment>
<comment type="subunit">
    <text evidence="1">Interacts with translational regulator CsrA and flagellin(s).</text>
</comment>
<comment type="subcellular location">
    <subcellularLocation>
        <location evidence="1">Cytoplasm</location>
    </subcellularLocation>
</comment>
<comment type="similarity">
    <text evidence="1">Belongs to the FliW family.</text>
</comment>
<dbReference type="EMBL" id="AE017226">
    <property type="protein sequence ID" value="AAS12872.1"/>
    <property type="molecule type" value="Genomic_DNA"/>
</dbReference>
<dbReference type="RefSeq" id="NP_972953.1">
    <property type="nucleotide sequence ID" value="NC_002967.9"/>
</dbReference>
<dbReference type="RefSeq" id="WP_002674247.1">
    <property type="nucleotide sequence ID" value="NC_002967.9"/>
</dbReference>
<dbReference type="SMR" id="Q73K68"/>
<dbReference type="STRING" id="243275.TDE_2354"/>
<dbReference type="PaxDb" id="243275-TDE_2354"/>
<dbReference type="GeneID" id="2739963"/>
<dbReference type="KEGG" id="tde:TDE_2354"/>
<dbReference type="PATRIC" id="fig|243275.7.peg.2222"/>
<dbReference type="eggNOG" id="COG1699">
    <property type="taxonomic scope" value="Bacteria"/>
</dbReference>
<dbReference type="HOGENOM" id="CLU_112356_0_2_12"/>
<dbReference type="OrthoDB" id="9801235at2"/>
<dbReference type="Proteomes" id="UP000008212">
    <property type="component" value="Chromosome"/>
</dbReference>
<dbReference type="GO" id="GO:0005737">
    <property type="term" value="C:cytoplasm"/>
    <property type="evidence" value="ECO:0007669"/>
    <property type="project" value="UniProtKB-SubCell"/>
</dbReference>
<dbReference type="GO" id="GO:0044780">
    <property type="term" value="P:bacterial-type flagellum assembly"/>
    <property type="evidence" value="ECO:0007669"/>
    <property type="project" value="UniProtKB-UniRule"/>
</dbReference>
<dbReference type="GO" id="GO:0006417">
    <property type="term" value="P:regulation of translation"/>
    <property type="evidence" value="ECO:0007669"/>
    <property type="project" value="UniProtKB-KW"/>
</dbReference>
<dbReference type="Gene3D" id="2.30.290.10">
    <property type="entry name" value="BH3618-like"/>
    <property type="match status" value="1"/>
</dbReference>
<dbReference type="HAMAP" id="MF_01185">
    <property type="entry name" value="FliW"/>
    <property type="match status" value="1"/>
</dbReference>
<dbReference type="InterPro" id="IPR003775">
    <property type="entry name" value="Flagellar_assembly_factor_FliW"/>
</dbReference>
<dbReference type="InterPro" id="IPR024046">
    <property type="entry name" value="Flagellar_assmbl_FliW_dom_sf"/>
</dbReference>
<dbReference type="NCBIfam" id="NF009800">
    <property type="entry name" value="PRK13285.2-3"/>
    <property type="match status" value="1"/>
</dbReference>
<dbReference type="PANTHER" id="PTHR39190">
    <property type="entry name" value="FLAGELLAR ASSEMBLY FACTOR FLIW"/>
    <property type="match status" value="1"/>
</dbReference>
<dbReference type="PANTHER" id="PTHR39190:SF1">
    <property type="entry name" value="FLAGELLAR ASSEMBLY FACTOR FLIW"/>
    <property type="match status" value="1"/>
</dbReference>
<dbReference type="Pfam" id="PF02623">
    <property type="entry name" value="FliW"/>
    <property type="match status" value="1"/>
</dbReference>
<dbReference type="SUPFAM" id="SSF141457">
    <property type="entry name" value="BH3618-like"/>
    <property type="match status" value="1"/>
</dbReference>
<evidence type="ECO:0000255" key="1">
    <source>
        <dbReference type="HAMAP-Rule" id="MF_01185"/>
    </source>
</evidence>
<protein>
    <recommendedName>
        <fullName evidence="1">Flagellar assembly factor FliW</fullName>
    </recommendedName>
</protein>
<organism>
    <name type="scientific">Treponema denticola (strain ATCC 35405 / DSM 14222 / CIP 103919 / JCM 8153 / KCTC 15104)</name>
    <dbReference type="NCBI Taxonomy" id="243275"/>
    <lineage>
        <taxon>Bacteria</taxon>
        <taxon>Pseudomonadati</taxon>
        <taxon>Spirochaetota</taxon>
        <taxon>Spirochaetia</taxon>
        <taxon>Spirochaetales</taxon>
        <taxon>Treponemataceae</taxon>
        <taxon>Treponema</taxon>
    </lineage>
</organism>
<sequence>MEIKTKAMGLVEIQDEQIIELVDGFYGFEEFHKYALLDSGKEPFFWVQSLDDQNLAFIVIDPFLFRPDYELDIDDELLKPIEAESPKDLLVFALVTIPPAGSPITANLQGPLIINKKNKKAFQAVLNDGKWNTKHDILAELNAAGRN</sequence>
<gene>
    <name evidence="1" type="primary">fliW</name>
    <name type="ordered locus">TDE_2354</name>
</gene>
<feature type="chain" id="PRO_0000273013" description="Flagellar assembly factor FliW">
    <location>
        <begin position="1"/>
        <end position="147"/>
    </location>
</feature>